<proteinExistence type="inferred from homology"/>
<protein>
    <recommendedName>
        <fullName evidence="1">Large ribosomal subunit protein uL2</fullName>
    </recommendedName>
    <alternativeName>
        <fullName evidence="3">50S ribosomal protein L2</fullName>
    </alternativeName>
</protein>
<sequence>MPLMKTKPTSPGRRSMVKVVNPDLHKGKPFAPLLEPQFQKAGRNNNGHITTRHKGGGHKHHYRVVDFKRNDKDGIPAKVERLEYDPNRSANIALIVFADGERRYIPAAKGMTVGQSLMSGSEAPIKSGNNLPIRNIPVGSTIHCVEIMPGKGAQVARSAGGSAVLLAREGVYAQVRLRSGEVRRVLIECRATIGEVGNEEHSLRVIGKAGANRWRGIRPTVRGVAMNPVDHPHGGGEGKTGEGRVPVSPWGTPTKGYRTRRNKRTTSMIVQRRQKR</sequence>
<keyword id="KW-1185">Reference proteome</keyword>
<keyword id="KW-0687">Ribonucleoprotein</keyword>
<keyword id="KW-0689">Ribosomal protein</keyword>
<keyword id="KW-0694">RNA-binding</keyword>
<keyword id="KW-0699">rRNA-binding</keyword>
<gene>
    <name evidence="1" type="primary">rplB</name>
    <name type="ordered locus">Pnuc_0056</name>
</gene>
<organism>
    <name type="scientific">Polynucleobacter asymbioticus (strain DSM 18221 / CIP 109841 / QLW-P1DMWA-1)</name>
    <name type="common">Polynucleobacter necessarius subsp. asymbioticus</name>
    <dbReference type="NCBI Taxonomy" id="312153"/>
    <lineage>
        <taxon>Bacteria</taxon>
        <taxon>Pseudomonadati</taxon>
        <taxon>Pseudomonadota</taxon>
        <taxon>Betaproteobacteria</taxon>
        <taxon>Burkholderiales</taxon>
        <taxon>Burkholderiaceae</taxon>
        <taxon>Polynucleobacter</taxon>
    </lineage>
</organism>
<evidence type="ECO:0000255" key="1">
    <source>
        <dbReference type="HAMAP-Rule" id="MF_01320"/>
    </source>
</evidence>
<evidence type="ECO:0000256" key="2">
    <source>
        <dbReference type="SAM" id="MobiDB-lite"/>
    </source>
</evidence>
<evidence type="ECO:0000305" key="3"/>
<accession>A4SUW4</accession>
<dbReference type="EMBL" id="CP000655">
    <property type="protein sequence ID" value="ABP33278.1"/>
    <property type="molecule type" value="Genomic_DNA"/>
</dbReference>
<dbReference type="RefSeq" id="WP_011901903.1">
    <property type="nucleotide sequence ID" value="NC_009379.1"/>
</dbReference>
<dbReference type="SMR" id="A4SUW4"/>
<dbReference type="GeneID" id="31480402"/>
<dbReference type="KEGG" id="pnu:Pnuc_0056"/>
<dbReference type="eggNOG" id="COG0090">
    <property type="taxonomic scope" value="Bacteria"/>
</dbReference>
<dbReference type="HOGENOM" id="CLU_036235_2_1_4"/>
<dbReference type="Proteomes" id="UP000000231">
    <property type="component" value="Chromosome"/>
</dbReference>
<dbReference type="GO" id="GO:0015934">
    <property type="term" value="C:large ribosomal subunit"/>
    <property type="evidence" value="ECO:0007669"/>
    <property type="project" value="InterPro"/>
</dbReference>
<dbReference type="GO" id="GO:0019843">
    <property type="term" value="F:rRNA binding"/>
    <property type="evidence" value="ECO:0007669"/>
    <property type="project" value="UniProtKB-UniRule"/>
</dbReference>
<dbReference type="GO" id="GO:0003735">
    <property type="term" value="F:structural constituent of ribosome"/>
    <property type="evidence" value="ECO:0007669"/>
    <property type="project" value="InterPro"/>
</dbReference>
<dbReference type="GO" id="GO:0016740">
    <property type="term" value="F:transferase activity"/>
    <property type="evidence" value="ECO:0007669"/>
    <property type="project" value="InterPro"/>
</dbReference>
<dbReference type="GO" id="GO:0002181">
    <property type="term" value="P:cytoplasmic translation"/>
    <property type="evidence" value="ECO:0007669"/>
    <property type="project" value="TreeGrafter"/>
</dbReference>
<dbReference type="FunFam" id="2.30.30.30:FF:000001">
    <property type="entry name" value="50S ribosomal protein L2"/>
    <property type="match status" value="1"/>
</dbReference>
<dbReference type="FunFam" id="2.40.50.140:FF:000003">
    <property type="entry name" value="50S ribosomal protein L2"/>
    <property type="match status" value="1"/>
</dbReference>
<dbReference type="FunFam" id="4.10.950.10:FF:000001">
    <property type="entry name" value="50S ribosomal protein L2"/>
    <property type="match status" value="1"/>
</dbReference>
<dbReference type="Gene3D" id="2.30.30.30">
    <property type="match status" value="1"/>
</dbReference>
<dbReference type="Gene3D" id="2.40.50.140">
    <property type="entry name" value="Nucleic acid-binding proteins"/>
    <property type="match status" value="1"/>
</dbReference>
<dbReference type="Gene3D" id="4.10.950.10">
    <property type="entry name" value="Ribosomal protein L2, domain 3"/>
    <property type="match status" value="1"/>
</dbReference>
<dbReference type="HAMAP" id="MF_01320_B">
    <property type="entry name" value="Ribosomal_uL2_B"/>
    <property type="match status" value="1"/>
</dbReference>
<dbReference type="InterPro" id="IPR012340">
    <property type="entry name" value="NA-bd_OB-fold"/>
</dbReference>
<dbReference type="InterPro" id="IPR014722">
    <property type="entry name" value="Rib_uL2_dom2"/>
</dbReference>
<dbReference type="InterPro" id="IPR002171">
    <property type="entry name" value="Ribosomal_uL2"/>
</dbReference>
<dbReference type="InterPro" id="IPR005880">
    <property type="entry name" value="Ribosomal_uL2_bac/org-type"/>
</dbReference>
<dbReference type="InterPro" id="IPR022669">
    <property type="entry name" value="Ribosomal_uL2_C"/>
</dbReference>
<dbReference type="InterPro" id="IPR022671">
    <property type="entry name" value="Ribosomal_uL2_CS"/>
</dbReference>
<dbReference type="InterPro" id="IPR014726">
    <property type="entry name" value="Ribosomal_uL2_dom3"/>
</dbReference>
<dbReference type="InterPro" id="IPR022666">
    <property type="entry name" value="Ribosomal_uL2_RNA-bd_dom"/>
</dbReference>
<dbReference type="InterPro" id="IPR008991">
    <property type="entry name" value="Translation_prot_SH3-like_sf"/>
</dbReference>
<dbReference type="NCBIfam" id="TIGR01171">
    <property type="entry name" value="rplB_bact"/>
    <property type="match status" value="1"/>
</dbReference>
<dbReference type="PANTHER" id="PTHR13691:SF5">
    <property type="entry name" value="LARGE RIBOSOMAL SUBUNIT PROTEIN UL2M"/>
    <property type="match status" value="1"/>
</dbReference>
<dbReference type="PANTHER" id="PTHR13691">
    <property type="entry name" value="RIBOSOMAL PROTEIN L2"/>
    <property type="match status" value="1"/>
</dbReference>
<dbReference type="Pfam" id="PF00181">
    <property type="entry name" value="Ribosomal_L2"/>
    <property type="match status" value="1"/>
</dbReference>
<dbReference type="Pfam" id="PF03947">
    <property type="entry name" value="Ribosomal_L2_C"/>
    <property type="match status" value="1"/>
</dbReference>
<dbReference type="PIRSF" id="PIRSF002158">
    <property type="entry name" value="Ribosomal_L2"/>
    <property type="match status" value="1"/>
</dbReference>
<dbReference type="SMART" id="SM01383">
    <property type="entry name" value="Ribosomal_L2"/>
    <property type="match status" value="1"/>
</dbReference>
<dbReference type="SMART" id="SM01382">
    <property type="entry name" value="Ribosomal_L2_C"/>
    <property type="match status" value="1"/>
</dbReference>
<dbReference type="SUPFAM" id="SSF50249">
    <property type="entry name" value="Nucleic acid-binding proteins"/>
    <property type="match status" value="1"/>
</dbReference>
<dbReference type="SUPFAM" id="SSF50104">
    <property type="entry name" value="Translation proteins SH3-like domain"/>
    <property type="match status" value="1"/>
</dbReference>
<dbReference type="PROSITE" id="PS00467">
    <property type="entry name" value="RIBOSOMAL_L2"/>
    <property type="match status" value="1"/>
</dbReference>
<reference key="1">
    <citation type="journal article" date="2012" name="Stand. Genomic Sci.">
        <title>Complete genome sequence of Polynucleobacter necessarius subsp. asymbioticus type strain (QLW-P1DMWA-1(T)).</title>
        <authorList>
            <person name="Meincke L."/>
            <person name="Copeland A."/>
            <person name="Lapidus A."/>
            <person name="Lucas S."/>
            <person name="Berry K.W."/>
            <person name="Del Rio T.G."/>
            <person name="Hammon N."/>
            <person name="Dalin E."/>
            <person name="Tice H."/>
            <person name="Pitluck S."/>
            <person name="Richardson P."/>
            <person name="Bruce D."/>
            <person name="Goodwin L."/>
            <person name="Han C."/>
            <person name="Tapia R."/>
            <person name="Detter J.C."/>
            <person name="Schmutz J."/>
            <person name="Brettin T."/>
            <person name="Larimer F."/>
            <person name="Land M."/>
            <person name="Hauser L."/>
            <person name="Kyrpides N.C."/>
            <person name="Ivanova N."/>
            <person name="Goker M."/>
            <person name="Woyke T."/>
            <person name="Wu Q.L."/>
            <person name="Pockl M."/>
            <person name="Hahn M.W."/>
            <person name="Klenk H.P."/>
        </authorList>
    </citation>
    <scope>NUCLEOTIDE SEQUENCE [LARGE SCALE GENOMIC DNA]</scope>
    <source>
        <strain>DSM 18221 / CIP 109841 / QLW-P1DMWA-1</strain>
    </source>
</reference>
<name>RL2_POLAQ</name>
<comment type="function">
    <text evidence="1">One of the primary rRNA binding proteins. Required for association of the 30S and 50S subunits to form the 70S ribosome, for tRNA binding and peptide bond formation. It has been suggested to have peptidyltransferase activity; this is somewhat controversial. Makes several contacts with the 16S rRNA in the 70S ribosome.</text>
</comment>
<comment type="subunit">
    <text evidence="1">Part of the 50S ribosomal subunit. Forms a bridge to the 30S subunit in the 70S ribosome.</text>
</comment>
<comment type="similarity">
    <text evidence="1">Belongs to the universal ribosomal protein uL2 family.</text>
</comment>
<feature type="chain" id="PRO_1000086342" description="Large ribosomal subunit protein uL2">
    <location>
        <begin position="1"/>
        <end position="276"/>
    </location>
</feature>
<feature type="region of interest" description="Disordered" evidence="2">
    <location>
        <begin position="224"/>
        <end position="276"/>
    </location>
</feature>
<feature type="compositionally biased region" description="Basic and acidic residues" evidence="2">
    <location>
        <begin position="230"/>
        <end position="242"/>
    </location>
</feature>